<comment type="function">
    <text evidence="1">Involved in the anomeric conversion of L-fucose.</text>
</comment>
<comment type="catalytic activity">
    <reaction evidence="1">
        <text>alpha-L-fucose = beta-L-fucose</text>
        <dbReference type="Rhea" id="RHEA:25580"/>
        <dbReference type="ChEBI" id="CHEBI:42548"/>
        <dbReference type="ChEBI" id="CHEBI:42589"/>
        <dbReference type="EC" id="5.1.3.29"/>
    </reaction>
</comment>
<comment type="pathway">
    <text evidence="1">Carbohydrate metabolism; L-fucose metabolism.</text>
</comment>
<comment type="subunit">
    <text evidence="1">Homodecamer.</text>
</comment>
<comment type="subcellular location">
    <subcellularLocation>
        <location evidence="1">Cytoplasm</location>
    </subcellularLocation>
</comment>
<comment type="similarity">
    <text evidence="1">Belongs to the RbsD / FucU family. FucU mutarotase subfamily.</text>
</comment>
<keyword id="KW-0119">Carbohydrate metabolism</keyword>
<keyword id="KW-0963">Cytoplasm</keyword>
<keyword id="KW-0294">Fucose metabolism</keyword>
<keyword id="KW-0413">Isomerase</keyword>
<accession>A5UHL6</accession>
<proteinExistence type="inferred from homology"/>
<name>FUCM_HAEIG</name>
<gene>
    <name evidence="1" type="primary">fucU</name>
    <name type="ordered locus">CGSHiGG_07005</name>
</gene>
<feature type="chain" id="PRO_0000344548" description="L-fucose mutarotase">
    <location>
        <begin position="1"/>
        <end position="144"/>
    </location>
</feature>
<feature type="active site" description="Proton donor" evidence="1">
    <location>
        <position position="22"/>
    </location>
</feature>
<feature type="binding site" evidence="1">
    <location>
        <position position="30"/>
    </location>
    <ligand>
        <name>substrate</name>
    </ligand>
</feature>
<feature type="binding site" evidence="1">
    <location>
        <position position="109"/>
    </location>
    <ligand>
        <name>substrate</name>
    </ligand>
</feature>
<feature type="binding site" evidence="1">
    <location>
        <begin position="131"/>
        <end position="133"/>
    </location>
    <ligand>
        <name>substrate</name>
    </ligand>
</feature>
<sequence length="144" mass="15750">MLKGIHPALSPELLKTLAEMGHGDEIVLADAHFPAHSLHKNVIRADGISIDILLEAITPLFEFDAYVDAPLLMMKAVEGDSLDPNVETRYLNAIESAVGFTPNLTCLERFDFYTRAKQAYAVVVSGEIAKYGNIIIKKGVTPIL</sequence>
<protein>
    <recommendedName>
        <fullName evidence="1">L-fucose mutarotase</fullName>
        <ecNumber evidence="1">5.1.3.29</ecNumber>
    </recommendedName>
    <alternativeName>
        <fullName evidence="1">Fucose 1-epimerase</fullName>
    </alternativeName>
    <alternativeName>
        <fullName evidence="1">Type-2 mutarotase</fullName>
    </alternativeName>
</protein>
<evidence type="ECO:0000255" key="1">
    <source>
        <dbReference type="HAMAP-Rule" id="MF_01662"/>
    </source>
</evidence>
<organism>
    <name type="scientific">Haemophilus influenzae (strain PittGG)</name>
    <dbReference type="NCBI Taxonomy" id="374931"/>
    <lineage>
        <taxon>Bacteria</taxon>
        <taxon>Pseudomonadati</taxon>
        <taxon>Pseudomonadota</taxon>
        <taxon>Gammaproteobacteria</taxon>
        <taxon>Pasteurellales</taxon>
        <taxon>Pasteurellaceae</taxon>
        <taxon>Haemophilus</taxon>
    </lineage>
</organism>
<reference key="1">
    <citation type="journal article" date="2007" name="Genome Biol.">
        <title>Characterization and modeling of the Haemophilus influenzae core and supragenomes based on the complete genomic sequences of Rd and 12 clinical nontypeable strains.</title>
        <authorList>
            <person name="Hogg J.S."/>
            <person name="Hu F.Z."/>
            <person name="Janto B."/>
            <person name="Boissy R."/>
            <person name="Hayes J."/>
            <person name="Keefe R."/>
            <person name="Post J.C."/>
            <person name="Ehrlich G.D."/>
        </authorList>
    </citation>
    <scope>NUCLEOTIDE SEQUENCE [LARGE SCALE GENOMIC DNA]</scope>
    <source>
        <strain>PittGG</strain>
    </source>
</reference>
<dbReference type="EC" id="5.1.3.29" evidence="1"/>
<dbReference type="EMBL" id="CP000672">
    <property type="protein sequence ID" value="ABR00272.1"/>
    <property type="molecule type" value="Genomic_DNA"/>
</dbReference>
<dbReference type="SMR" id="A5UHL6"/>
<dbReference type="KEGG" id="hiq:CGSHiGG_07005"/>
<dbReference type="HOGENOM" id="CLU_120075_1_0_6"/>
<dbReference type="UniPathway" id="UPA00956"/>
<dbReference type="Proteomes" id="UP000001990">
    <property type="component" value="Chromosome"/>
</dbReference>
<dbReference type="GO" id="GO:0005737">
    <property type="term" value="C:cytoplasm"/>
    <property type="evidence" value="ECO:0007669"/>
    <property type="project" value="UniProtKB-SubCell"/>
</dbReference>
<dbReference type="GO" id="GO:0042806">
    <property type="term" value="F:fucose binding"/>
    <property type="evidence" value="ECO:0007669"/>
    <property type="project" value="InterPro"/>
</dbReference>
<dbReference type="GO" id="GO:0036373">
    <property type="term" value="F:L-fucose mutarotase activity"/>
    <property type="evidence" value="ECO:0007669"/>
    <property type="project" value="UniProtKB-EC"/>
</dbReference>
<dbReference type="GO" id="GO:0036065">
    <property type="term" value="P:fucosylation"/>
    <property type="evidence" value="ECO:0007669"/>
    <property type="project" value="TreeGrafter"/>
</dbReference>
<dbReference type="GO" id="GO:0042354">
    <property type="term" value="P:L-fucose metabolic process"/>
    <property type="evidence" value="ECO:0007669"/>
    <property type="project" value="UniProtKB-UniRule"/>
</dbReference>
<dbReference type="FunFam" id="3.40.1650.10:FF:000001">
    <property type="entry name" value="L-fucose mutarotase"/>
    <property type="match status" value="1"/>
</dbReference>
<dbReference type="Gene3D" id="3.40.1650.10">
    <property type="entry name" value="RbsD-like domain"/>
    <property type="match status" value="1"/>
</dbReference>
<dbReference type="HAMAP" id="MF_01662">
    <property type="entry name" value="L_fucose_rotase"/>
    <property type="match status" value="1"/>
</dbReference>
<dbReference type="InterPro" id="IPR023751">
    <property type="entry name" value="L-fucose_mutarotase"/>
</dbReference>
<dbReference type="InterPro" id="IPR023750">
    <property type="entry name" value="RbsD-like_sf"/>
</dbReference>
<dbReference type="InterPro" id="IPR050443">
    <property type="entry name" value="RbsD/FucU_mutarotase"/>
</dbReference>
<dbReference type="InterPro" id="IPR007721">
    <property type="entry name" value="RbsD_FucU"/>
</dbReference>
<dbReference type="NCBIfam" id="NF011949">
    <property type="entry name" value="PRK15420.1"/>
    <property type="match status" value="1"/>
</dbReference>
<dbReference type="PANTHER" id="PTHR31690">
    <property type="entry name" value="FUCOSE MUTAROTASE"/>
    <property type="match status" value="1"/>
</dbReference>
<dbReference type="PANTHER" id="PTHR31690:SF4">
    <property type="entry name" value="FUCOSE MUTAROTASE"/>
    <property type="match status" value="1"/>
</dbReference>
<dbReference type="Pfam" id="PF05025">
    <property type="entry name" value="RbsD_FucU"/>
    <property type="match status" value="1"/>
</dbReference>
<dbReference type="SUPFAM" id="SSF102546">
    <property type="entry name" value="RbsD-like"/>
    <property type="match status" value="1"/>
</dbReference>